<name>RHLB_ECOLU</name>
<proteinExistence type="inferred from homology"/>
<dbReference type="EC" id="3.6.4.13" evidence="1"/>
<dbReference type="EMBL" id="CU928163">
    <property type="protein sequence ID" value="CAR15440.1"/>
    <property type="molecule type" value="Genomic_DNA"/>
</dbReference>
<dbReference type="RefSeq" id="WP_000047500.1">
    <property type="nucleotide sequence ID" value="NC_011751.1"/>
</dbReference>
<dbReference type="RefSeq" id="YP_002414935.1">
    <property type="nucleotide sequence ID" value="NC_011751.1"/>
</dbReference>
<dbReference type="SMR" id="B7NF85"/>
<dbReference type="STRING" id="585056.ECUMN_4304"/>
<dbReference type="KEGG" id="eum:ECUMN_4304"/>
<dbReference type="PATRIC" id="fig|585056.7.peg.4471"/>
<dbReference type="HOGENOM" id="CLU_003041_1_3_6"/>
<dbReference type="Proteomes" id="UP000007097">
    <property type="component" value="Chromosome"/>
</dbReference>
<dbReference type="GO" id="GO:0005829">
    <property type="term" value="C:cytosol"/>
    <property type="evidence" value="ECO:0007669"/>
    <property type="project" value="TreeGrafter"/>
</dbReference>
<dbReference type="GO" id="GO:0005524">
    <property type="term" value="F:ATP binding"/>
    <property type="evidence" value="ECO:0007669"/>
    <property type="project" value="UniProtKB-UniRule"/>
</dbReference>
<dbReference type="GO" id="GO:0016887">
    <property type="term" value="F:ATP hydrolysis activity"/>
    <property type="evidence" value="ECO:0007669"/>
    <property type="project" value="RHEA"/>
</dbReference>
<dbReference type="GO" id="GO:0003723">
    <property type="term" value="F:RNA binding"/>
    <property type="evidence" value="ECO:0007669"/>
    <property type="project" value="UniProtKB-UniRule"/>
</dbReference>
<dbReference type="GO" id="GO:0003724">
    <property type="term" value="F:RNA helicase activity"/>
    <property type="evidence" value="ECO:0007669"/>
    <property type="project" value="UniProtKB-UniRule"/>
</dbReference>
<dbReference type="GO" id="GO:0006401">
    <property type="term" value="P:RNA catabolic process"/>
    <property type="evidence" value="ECO:0007669"/>
    <property type="project" value="UniProtKB-UniRule"/>
</dbReference>
<dbReference type="CDD" id="cd00268">
    <property type="entry name" value="DEADc"/>
    <property type="match status" value="1"/>
</dbReference>
<dbReference type="CDD" id="cd18787">
    <property type="entry name" value="SF2_C_DEAD"/>
    <property type="match status" value="1"/>
</dbReference>
<dbReference type="FunFam" id="3.40.50.300:FF:000008">
    <property type="entry name" value="ATP-dependent RNA helicase RhlB"/>
    <property type="match status" value="1"/>
</dbReference>
<dbReference type="FunFam" id="3.40.50.300:FF:000312">
    <property type="entry name" value="ATP-dependent RNA helicase RhlB"/>
    <property type="match status" value="1"/>
</dbReference>
<dbReference type="Gene3D" id="3.40.50.300">
    <property type="entry name" value="P-loop containing nucleotide triphosphate hydrolases"/>
    <property type="match status" value="2"/>
</dbReference>
<dbReference type="HAMAP" id="MF_00661">
    <property type="entry name" value="DEAD_helicase_RhlB"/>
    <property type="match status" value="1"/>
</dbReference>
<dbReference type="InterPro" id="IPR011545">
    <property type="entry name" value="DEAD/DEAH_box_helicase_dom"/>
</dbReference>
<dbReference type="InterPro" id="IPR050079">
    <property type="entry name" value="DEAD_box_RNA_helicase"/>
</dbReference>
<dbReference type="InterPro" id="IPR014001">
    <property type="entry name" value="Helicase_ATP-bd"/>
</dbReference>
<dbReference type="InterPro" id="IPR001650">
    <property type="entry name" value="Helicase_C-like"/>
</dbReference>
<dbReference type="InterPro" id="IPR027417">
    <property type="entry name" value="P-loop_NTPase"/>
</dbReference>
<dbReference type="InterPro" id="IPR000629">
    <property type="entry name" value="RNA-helicase_DEAD-box_CS"/>
</dbReference>
<dbReference type="InterPro" id="IPR023554">
    <property type="entry name" value="RNA_helicase_ATP-dep_RhlB"/>
</dbReference>
<dbReference type="InterPro" id="IPR014014">
    <property type="entry name" value="RNA_helicase_DEAD_Q_motif"/>
</dbReference>
<dbReference type="NCBIfam" id="NF003419">
    <property type="entry name" value="PRK04837.1"/>
    <property type="match status" value="1"/>
</dbReference>
<dbReference type="PANTHER" id="PTHR47959:SF10">
    <property type="entry name" value="ATP-DEPENDENT RNA HELICASE RHLB"/>
    <property type="match status" value="1"/>
</dbReference>
<dbReference type="PANTHER" id="PTHR47959">
    <property type="entry name" value="ATP-DEPENDENT RNA HELICASE RHLE-RELATED"/>
    <property type="match status" value="1"/>
</dbReference>
<dbReference type="Pfam" id="PF00270">
    <property type="entry name" value="DEAD"/>
    <property type="match status" value="1"/>
</dbReference>
<dbReference type="Pfam" id="PF00271">
    <property type="entry name" value="Helicase_C"/>
    <property type="match status" value="1"/>
</dbReference>
<dbReference type="SMART" id="SM00487">
    <property type="entry name" value="DEXDc"/>
    <property type="match status" value="1"/>
</dbReference>
<dbReference type="SMART" id="SM00490">
    <property type="entry name" value="HELICc"/>
    <property type="match status" value="1"/>
</dbReference>
<dbReference type="SUPFAM" id="SSF52540">
    <property type="entry name" value="P-loop containing nucleoside triphosphate hydrolases"/>
    <property type="match status" value="1"/>
</dbReference>
<dbReference type="PROSITE" id="PS00039">
    <property type="entry name" value="DEAD_ATP_HELICASE"/>
    <property type="match status" value="1"/>
</dbReference>
<dbReference type="PROSITE" id="PS51192">
    <property type="entry name" value="HELICASE_ATP_BIND_1"/>
    <property type="match status" value="1"/>
</dbReference>
<dbReference type="PROSITE" id="PS51194">
    <property type="entry name" value="HELICASE_CTER"/>
    <property type="match status" value="1"/>
</dbReference>
<dbReference type="PROSITE" id="PS51195">
    <property type="entry name" value="Q_MOTIF"/>
    <property type="match status" value="1"/>
</dbReference>
<keyword id="KW-0067">ATP-binding</keyword>
<keyword id="KW-0963">Cytoplasm</keyword>
<keyword id="KW-0347">Helicase</keyword>
<keyword id="KW-0378">Hydrolase</keyword>
<keyword id="KW-0547">Nucleotide-binding</keyword>
<keyword id="KW-0694">RNA-binding</keyword>
<evidence type="ECO:0000255" key="1">
    <source>
        <dbReference type="HAMAP-Rule" id="MF_00661"/>
    </source>
</evidence>
<evidence type="ECO:0000256" key="2">
    <source>
        <dbReference type="SAM" id="MobiDB-lite"/>
    </source>
</evidence>
<protein>
    <recommendedName>
        <fullName evidence="1">ATP-dependent RNA helicase RhlB</fullName>
        <ecNumber evidence="1">3.6.4.13</ecNumber>
    </recommendedName>
</protein>
<organism>
    <name type="scientific">Escherichia coli O17:K52:H18 (strain UMN026 / ExPEC)</name>
    <dbReference type="NCBI Taxonomy" id="585056"/>
    <lineage>
        <taxon>Bacteria</taxon>
        <taxon>Pseudomonadati</taxon>
        <taxon>Pseudomonadota</taxon>
        <taxon>Gammaproteobacteria</taxon>
        <taxon>Enterobacterales</taxon>
        <taxon>Enterobacteriaceae</taxon>
        <taxon>Escherichia</taxon>
    </lineage>
</organism>
<reference key="1">
    <citation type="journal article" date="2009" name="PLoS Genet.">
        <title>Organised genome dynamics in the Escherichia coli species results in highly diverse adaptive paths.</title>
        <authorList>
            <person name="Touchon M."/>
            <person name="Hoede C."/>
            <person name="Tenaillon O."/>
            <person name="Barbe V."/>
            <person name="Baeriswyl S."/>
            <person name="Bidet P."/>
            <person name="Bingen E."/>
            <person name="Bonacorsi S."/>
            <person name="Bouchier C."/>
            <person name="Bouvet O."/>
            <person name="Calteau A."/>
            <person name="Chiapello H."/>
            <person name="Clermont O."/>
            <person name="Cruveiller S."/>
            <person name="Danchin A."/>
            <person name="Diard M."/>
            <person name="Dossat C."/>
            <person name="Karoui M.E."/>
            <person name="Frapy E."/>
            <person name="Garry L."/>
            <person name="Ghigo J.M."/>
            <person name="Gilles A.M."/>
            <person name="Johnson J."/>
            <person name="Le Bouguenec C."/>
            <person name="Lescat M."/>
            <person name="Mangenot S."/>
            <person name="Martinez-Jehanne V."/>
            <person name="Matic I."/>
            <person name="Nassif X."/>
            <person name="Oztas S."/>
            <person name="Petit M.A."/>
            <person name="Pichon C."/>
            <person name="Rouy Z."/>
            <person name="Ruf C.S."/>
            <person name="Schneider D."/>
            <person name="Tourret J."/>
            <person name="Vacherie B."/>
            <person name="Vallenet D."/>
            <person name="Medigue C."/>
            <person name="Rocha E.P.C."/>
            <person name="Denamur E."/>
        </authorList>
    </citation>
    <scope>NUCLEOTIDE SEQUENCE [LARGE SCALE GENOMIC DNA]</scope>
    <source>
        <strain>UMN026 / ExPEC</strain>
    </source>
</reference>
<comment type="function">
    <text evidence="1">DEAD-box RNA helicase involved in RNA degradation. Has RNA-dependent ATPase activity and unwinds double-stranded RNA.</text>
</comment>
<comment type="catalytic activity">
    <reaction evidence="1">
        <text>ATP + H2O = ADP + phosphate + H(+)</text>
        <dbReference type="Rhea" id="RHEA:13065"/>
        <dbReference type="ChEBI" id="CHEBI:15377"/>
        <dbReference type="ChEBI" id="CHEBI:15378"/>
        <dbReference type="ChEBI" id="CHEBI:30616"/>
        <dbReference type="ChEBI" id="CHEBI:43474"/>
        <dbReference type="ChEBI" id="CHEBI:456216"/>
        <dbReference type="EC" id="3.6.4.13"/>
    </reaction>
</comment>
<comment type="subunit">
    <text evidence="1">Component of the RNA degradosome, which is a multiprotein complex involved in RNA processing and mRNA degradation.</text>
</comment>
<comment type="subcellular location">
    <subcellularLocation>
        <location evidence="1">Cytoplasm</location>
    </subcellularLocation>
</comment>
<comment type="similarity">
    <text evidence="1">Belongs to the DEAD box helicase family. RhlB subfamily.</text>
</comment>
<accession>B7NF85</accession>
<gene>
    <name evidence="1" type="primary">rhlB</name>
    <name type="ordered locus">ECUMN_4304</name>
</gene>
<feature type="chain" id="PRO_1000131291" description="ATP-dependent RNA helicase RhlB">
    <location>
        <begin position="1"/>
        <end position="421"/>
    </location>
</feature>
<feature type="domain" description="Helicase ATP-binding" evidence="1">
    <location>
        <begin position="40"/>
        <end position="219"/>
    </location>
</feature>
<feature type="domain" description="Helicase C-terminal" evidence="1">
    <location>
        <begin position="245"/>
        <end position="390"/>
    </location>
</feature>
<feature type="region of interest" description="Disordered" evidence="2">
    <location>
        <begin position="392"/>
        <end position="421"/>
    </location>
</feature>
<feature type="short sequence motif" description="Q motif">
    <location>
        <begin position="9"/>
        <end position="37"/>
    </location>
</feature>
<feature type="short sequence motif" description="DEAD box">
    <location>
        <begin position="165"/>
        <end position="168"/>
    </location>
</feature>
<feature type="compositionally biased region" description="Low complexity" evidence="2">
    <location>
        <begin position="402"/>
        <end position="414"/>
    </location>
</feature>
<feature type="binding site" evidence="1">
    <location>
        <begin position="53"/>
        <end position="60"/>
    </location>
    <ligand>
        <name>ATP</name>
        <dbReference type="ChEBI" id="CHEBI:30616"/>
    </ligand>
</feature>
<sequence length="421" mass="47156">MSKTHLTEQKFSDFALHPKVVEALEKKGFHNCTPIQALALPLTLAGRDVAGQAQTGTGKTMAFLTSTFHYLLSHPAIADRKVNQPRALIMAPTRELAVQIHADAEPLAEATGLKLGLAYGGDGYDKQLKVLESGVDILIGTTGRLIDYAKQNHINLGAIQVVVLDEADRMYDLGFIKDIRWLFRRMPPANQRLNMLFSATLSYRVRELAFEQMNNAEYIEVEPEQKTGHRIKEELFYPSNEEKMRLLQTLIEEEWPDRAIIFANTKHRCEEIWGHLAADGHRVGLLTGDVAQKKRLRILDEFTRGDLDILVATDVAARGLHIPAVTHVFNYDLPDDCEDYVHRIGRTGRAGASGHSISLACEEYALNLPAIETYIGHSIPVSKYNPDALMTDLPKPLRLTRPRTGNGPRRTGTPRNRRRSG</sequence>